<proteinExistence type="inferred from homology"/>
<reference key="1">
    <citation type="journal article" date="2005" name="J. Bacteriol.">
        <title>Whole-genome sequence analysis of Pseudomonas syringae pv. phaseolicola 1448A reveals divergence among pathovars in genes involved in virulence and transposition.</title>
        <authorList>
            <person name="Joardar V."/>
            <person name="Lindeberg M."/>
            <person name="Jackson R.W."/>
            <person name="Selengut J."/>
            <person name="Dodson R."/>
            <person name="Brinkac L.M."/>
            <person name="Daugherty S.C."/>
            <person name="DeBoy R.T."/>
            <person name="Durkin A.S."/>
            <person name="Gwinn Giglio M."/>
            <person name="Madupu R."/>
            <person name="Nelson W.C."/>
            <person name="Rosovitz M.J."/>
            <person name="Sullivan S.A."/>
            <person name="Crabtree J."/>
            <person name="Creasy T."/>
            <person name="Davidsen T.M."/>
            <person name="Haft D.H."/>
            <person name="Zafar N."/>
            <person name="Zhou L."/>
            <person name="Halpin R."/>
            <person name="Holley T."/>
            <person name="Khouri H.M."/>
            <person name="Feldblyum T.V."/>
            <person name="White O."/>
            <person name="Fraser C.M."/>
            <person name="Chatterjee A.K."/>
            <person name="Cartinhour S."/>
            <person name="Schneider D."/>
            <person name="Mansfield J.W."/>
            <person name="Collmer A."/>
            <person name="Buell R."/>
        </authorList>
    </citation>
    <scope>NUCLEOTIDE SEQUENCE [LARGE SCALE GENOMIC DNA]</scope>
    <source>
        <strain>1448A / Race 6</strain>
    </source>
</reference>
<protein>
    <recommendedName>
        <fullName evidence="1">PqqA binding protein</fullName>
    </recommendedName>
    <alternativeName>
        <fullName evidence="1">Coenzyme PQQ synthesis protein D</fullName>
    </alternativeName>
    <alternativeName>
        <fullName evidence="1">Pyrroloquinoline quinone biosynthesis protein D</fullName>
    </alternativeName>
</protein>
<name>PQQD_PSE14</name>
<gene>
    <name evidence="1" type="primary">pqqD</name>
    <name type="ordered locus">PSPPH_4707</name>
</gene>
<organism>
    <name type="scientific">Pseudomonas savastanoi pv. phaseolicola (strain 1448A / Race 6)</name>
    <name type="common">Pseudomonas syringae pv. phaseolicola (strain 1448A / Race 6)</name>
    <dbReference type="NCBI Taxonomy" id="264730"/>
    <lineage>
        <taxon>Bacteria</taxon>
        <taxon>Pseudomonadati</taxon>
        <taxon>Pseudomonadota</taxon>
        <taxon>Gammaproteobacteria</taxon>
        <taxon>Pseudomonadales</taxon>
        <taxon>Pseudomonadaceae</taxon>
        <taxon>Pseudomonas</taxon>
    </lineage>
</organism>
<comment type="function">
    <text evidence="1">Functions as a PqqA binding protein and presents PqqA to PqqE, in the pyrroloquinoline quinone (PQQ) biosynthetic pathway.</text>
</comment>
<comment type="pathway">
    <text evidence="1">Cofactor biosynthesis; pyrroloquinoline quinone biosynthesis.</text>
</comment>
<comment type="subunit">
    <text evidence="1">Monomer. Interacts with PqqE.</text>
</comment>
<comment type="similarity">
    <text evidence="1">Belongs to the PqqD family.</text>
</comment>
<keyword id="KW-0884">PQQ biosynthesis</keyword>
<feature type="chain" id="PRO_1000061683" description="PqqA binding protein">
    <location>
        <begin position="1"/>
        <end position="94"/>
    </location>
</feature>
<accession>Q48CT4</accession>
<sequence length="94" mass="10834">MKHDPQFRALTPKWHQGYRFQYEPAQKAHVVLYPEGMIKLNDSAALIGGLIDGKRTITAIIHELQQQFPNVPELGMDVDEFMEGTKKKNWIDLV</sequence>
<evidence type="ECO:0000255" key="1">
    <source>
        <dbReference type="HAMAP-Rule" id="MF_00655"/>
    </source>
</evidence>
<dbReference type="EMBL" id="CP000058">
    <property type="protein sequence ID" value="AAZ36715.1"/>
    <property type="molecule type" value="Genomic_DNA"/>
</dbReference>
<dbReference type="RefSeq" id="WP_004654744.1">
    <property type="nucleotide sequence ID" value="NC_005773.3"/>
</dbReference>
<dbReference type="SMR" id="Q48CT4"/>
<dbReference type="KEGG" id="psp:PSPPH_4707"/>
<dbReference type="eggNOG" id="ENOG5032Z81">
    <property type="taxonomic scope" value="Bacteria"/>
</dbReference>
<dbReference type="HOGENOM" id="CLU_163864_2_1_6"/>
<dbReference type="UniPathway" id="UPA00539"/>
<dbReference type="Proteomes" id="UP000000551">
    <property type="component" value="Chromosome"/>
</dbReference>
<dbReference type="GO" id="GO:0048038">
    <property type="term" value="F:quinone binding"/>
    <property type="evidence" value="ECO:0007669"/>
    <property type="project" value="InterPro"/>
</dbReference>
<dbReference type="GO" id="GO:0018189">
    <property type="term" value="P:pyrroloquinoline quinone biosynthetic process"/>
    <property type="evidence" value="ECO:0007669"/>
    <property type="project" value="UniProtKB-UniRule"/>
</dbReference>
<dbReference type="Gene3D" id="1.10.10.1150">
    <property type="entry name" value="Coenzyme PQQ synthesis protein D (PqqD)"/>
    <property type="match status" value="1"/>
</dbReference>
<dbReference type="HAMAP" id="MF_00655">
    <property type="entry name" value="PQQ_syn_PqqD"/>
    <property type="match status" value="1"/>
</dbReference>
<dbReference type="InterPro" id="IPR008792">
    <property type="entry name" value="PQQD"/>
</dbReference>
<dbReference type="InterPro" id="IPR022479">
    <property type="entry name" value="PqqD_bac"/>
</dbReference>
<dbReference type="InterPro" id="IPR041881">
    <property type="entry name" value="PqqD_sf"/>
</dbReference>
<dbReference type="NCBIfam" id="TIGR03859">
    <property type="entry name" value="PQQ_PqqD"/>
    <property type="match status" value="1"/>
</dbReference>
<dbReference type="NCBIfam" id="NF002535">
    <property type="entry name" value="PRK02079.1"/>
    <property type="match status" value="1"/>
</dbReference>
<dbReference type="Pfam" id="PF05402">
    <property type="entry name" value="PqqD"/>
    <property type="match status" value="1"/>
</dbReference>